<keyword id="KW-0240">DNA-directed RNA polymerase</keyword>
<keyword id="KW-0548">Nucleotidyltransferase</keyword>
<keyword id="KW-1185">Reference proteome</keyword>
<keyword id="KW-0804">Transcription</keyword>
<keyword id="KW-0808">Transferase</keyword>
<sequence>MVGHLVKYGKHRTRRSYASIKEVLDVPNLIEIQTASYQWFLNDGIKEMFGDIMPIDDFQGTLSLEYVDYQLMEPKYNIDEAREHDANYSAPLHVTLRLTNHETGEIKSQDVFFGDFPLMTEQGTFIINGAERVIVSQLVRSPGIYYNQTTDKNGRPHFGTTVIPNRGAWLEYETDAKGIANVRIDRTRKLLMTELVRALGFGSDSDIIDIFSDQYDALNMTLEKDVHKDMSDSRVEEALKDVYERLRPGEPKTADSSRALLVARFFDPKRYDLASVGRYKINKKLSLKTRLLNQTLAETLADPDSGEIIAEKGTLVDKEVISKLTPYLDREDFKTTTYTPSGDAVLEEPVTLQKIKIESPENPEKTLLLIGNGHIDEDDRTVRPADILAGMNYFLNLQEGVGHVDDIDHLGNRRIRSVGELLQNQFRIGLTRMERVVRERMSIQDANTVTPQQLINIRPVVAAVKEFFGSSQLSQFMDQTNPLGEMNHKRRLSALGPGGLTRDRAGVEVRDVHYTHYGRIDPIETPEGPNIGLINSLATYGRINKYGFVETPYRRVDWTTHKVTDKIDYLTADEEDNYIVAQANSPLNEDGSFVHNTVMARFGEENIETPIDRIDYMDVSPKQVVSVGTAAIPFLENDDSNRALMGANMQRQAVPLLDPHSPLVGTGIEYKAAHDSGVAMIARASGEVEYVDGRQIRVRREDGQLDTYELMKFRRSNGGKNYNQKPIVHVGEHIEADEVLADGPSMEQGELALGQNPLIAFMTWQGYNFEDAIVLNERLVREDVYTSIHIEEYDSEARDTKLGPEEMTREIPNTGEDQLKDLDADGIIRVGAEVHDGDILVGKVTPKGVTELSAEERLLHAIFGEKAREVRDTSLRVPHGGGGVVQNVRIYTPENGDELAPGVNMMVRVYIAQKRKIQVGDKMAGRHGNKGTVSVVVPEEDMPYMPDGTPIDILLSPMGVPSRMNIGQVLELHLGFAAKKLGIHVASPVFDGASDDEIEMALREAGLPQDGKSVVYDGRTGEAFDKRVGVGVMHYMKLAHMVDDKIHARSIGPYSLVTQQPLGGKAQFGGQRFGEMEVWALEAYGAAYTLQEILTYKSDDVAGRVKVYESIIKGEPIPRPGVPESFRVLVKELQALGLDMQVLDGAGDEVELRQMDEDDSILPVDALEKLARTNPDLLNKDDEEVAAAFSKVEEQSQTFEEK</sequence>
<organism>
    <name type="scientific">Leuconostoc mesenteroides subsp. mesenteroides (strain ATCC 8293 / DSM 20343 / BCRC 11652 / CCM 1803 / JCM 6124 / NCDO 523 / NBRC 100496 / NCIMB 8023 / NCTC 12954 / NRRL B-1118 / 37Y)</name>
    <dbReference type="NCBI Taxonomy" id="203120"/>
    <lineage>
        <taxon>Bacteria</taxon>
        <taxon>Bacillati</taxon>
        <taxon>Bacillota</taxon>
        <taxon>Bacilli</taxon>
        <taxon>Lactobacillales</taxon>
        <taxon>Lactobacillaceae</taxon>
        <taxon>Leuconostoc</taxon>
    </lineage>
</organism>
<feature type="chain" id="PRO_0000300340" description="DNA-directed RNA polymerase subunit beta">
    <location>
        <begin position="1"/>
        <end position="1202"/>
    </location>
</feature>
<name>RPOB_LEUMM</name>
<reference key="1">
    <citation type="journal article" date="2006" name="Proc. Natl. Acad. Sci. U.S.A.">
        <title>Comparative genomics of the lactic acid bacteria.</title>
        <authorList>
            <person name="Makarova K.S."/>
            <person name="Slesarev A."/>
            <person name="Wolf Y.I."/>
            <person name="Sorokin A."/>
            <person name="Mirkin B."/>
            <person name="Koonin E.V."/>
            <person name="Pavlov A."/>
            <person name="Pavlova N."/>
            <person name="Karamychev V."/>
            <person name="Polouchine N."/>
            <person name="Shakhova V."/>
            <person name="Grigoriev I."/>
            <person name="Lou Y."/>
            <person name="Rohksar D."/>
            <person name="Lucas S."/>
            <person name="Huang K."/>
            <person name="Goodstein D.M."/>
            <person name="Hawkins T."/>
            <person name="Plengvidhya V."/>
            <person name="Welker D."/>
            <person name="Hughes J."/>
            <person name="Goh Y."/>
            <person name="Benson A."/>
            <person name="Baldwin K."/>
            <person name="Lee J.-H."/>
            <person name="Diaz-Muniz I."/>
            <person name="Dosti B."/>
            <person name="Smeianov V."/>
            <person name="Wechter W."/>
            <person name="Barabote R."/>
            <person name="Lorca G."/>
            <person name="Altermann E."/>
            <person name="Barrangou R."/>
            <person name="Ganesan B."/>
            <person name="Xie Y."/>
            <person name="Rawsthorne H."/>
            <person name="Tamir D."/>
            <person name="Parker C."/>
            <person name="Breidt F."/>
            <person name="Broadbent J.R."/>
            <person name="Hutkins R."/>
            <person name="O'Sullivan D."/>
            <person name="Steele J."/>
            <person name="Unlu G."/>
            <person name="Saier M.H. Jr."/>
            <person name="Klaenhammer T."/>
            <person name="Richardson P."/>
            <person name="Kozyavkin S."/>
            <person name="Weimer B.C."/>
            <person name="Mills D.A."/>
        </authorList>
    </citation>
    <scope>NUCLEOTIDE SEQUENCE [LARGE SCALE GENOMIC DNA]</scope>
    <source>
        <strain>ATCC 8293 / DSM 20343 / BCRC 11652 / CCM 1803 / JCM 6124 / NCDO 523 / NBRC 100496 / NCIMB 8023 / NCTC 12954 / NRRL B-1118 / 37Y</strain>
    </source>
</reference>
<protein>
    <recommendedName>
        <fullName evidence="1">DNA-directed RNA polymerase subunit beta</fullName>
        <shortName evidence="1">RNAP subunit beta</shortName>
        <ecNumber evidence="1">2.7.7.6</ecNumber>
    </recommendedName>
    <alternativeName>
        <fullName evidence="1">RNA polymerase subunit beta</fullName>
    </alternativeName>
    <alternativeName>
        <fullName evidence="1">Transcriptase subunit beta</fullName>
    </alternativeName>
</protein>
<proteinExistence type="inferred from homology"/>
<comment type="function">
    <text evidence="1">DNA-dependent RNA polymerase catalyzes the transcription of DNA into RNA using the four ribonucleoside triphosphates as substrates.</text>
</comment>
<comment type="catalytic activity">
    <reaction evidence="1">
        <text>RNA(n) + a ribonucleoside 5'-triphosphate = RNA(n+1) + diphosphate</text>
        <dbReference type="Rhea" id="RHEA:21248"/>
        <dbReference type="Rhea" id="RHEA-COMP:14527"/>
        <dbReference type="Rhea" id="RHEA-COMP:17342"/>
        <dbReference type="ChEBI" id="CHEBI:33019"/>
        <dbReference type="ChEBI" id="CHEBI:61557"/>
        <dbReference type="ChEBI" id="CHEBI:140395"/>
        <dbReference type="EC" id="2.7.7.6"/>
    </reaction>
</comment>
<comment type="subunit">
    <text evidence="1">The RNAP catalytic core consists of 2 alpha, 1 beta, 1 beta' and 1 omega subunit. When a sigma factor is associated with the core the holoenzyme is formed, which can initiate transcription.</text>
</comment>
<comment type="similarity">
    <text evidence="1">Belongs to the RNA polymerase beta chain family.</text>
</comment>
<accession>Q03V60</accession>
<evidence type="ECO:0000255" key="1">
    <source>
        <dbReference type="HAMAP-Rule" id="MF_01321"/>
    </source>
</evidence>
<gene>
    <name evidence="1" type="primary">rpoB</name>
    <name type="ordered locus">LEUM_1825</name>
</gene>
<dbReference type="EC" id="2.7.7.6" evidence="1"/>
<dbReference type="EMBL" id="CP000414">
    <property type="protein sequence ID" value="ABJ62912.1"/>
    <property type="molecule type" value="Genomic_DNA"/>
</dbReference>
<dbReference type="RefSeq" id="WP_011680408.1">
    <property type="nucleotide sequence ID" value="NC_008531.1"/>
</dbReference>
<dbReference type="SMR" id="Q03V60"/>
<dbReference type="EnsemblBacteria" id="ABJ62912">
    <property type="protein sequence ID" value="ABJ62912"/>
    <property type="gene ID" value="LEUM_1825"/>
</dbReference>
<dbReference type="GeneID" id="29577029"/>
<dbReference type="KEGG" id="lme:LEUM_1825"/>
<dbReference type="eggNOG" id="COG0085">
    <property type="taxonomic scope" value="Bacteria"/>
</dbReference>
<dbReference type="HOGENOM" id="CLU_000524_4_0_9"/>
<dbReference type="Proteomes" id="UP000000362">
    <property type="component" value="Chromosome"/>
</dbReference>
<dbReference type="GO" id="GO:0000428">
    <property type="term" value="C:DNA-directed RNA polymerase complex"/>
    <property type="evidence" value="ECO:0007669"/>
    <property type="project" value="UniProtKB-KW"/>
</dbReference>
<dbReference type="GO" id="GO:0003677">
    <property type="term" value="F:DNA binding"/>
    <property type="evidence" value="ECO:0007669"/>
    <property type="project" value="UniProtKB-UniRule"/>
</dbReference>
<dbReference type="GO" id="GO:0003899">
    <property type="term" value="F:DNA-directed RNA polymerase activity"/>
    <property type="evidence" value="ECO:0007669"/>
    <property type="project" value="UniProtKB-UniRule"/>
</dbReference>
<dbReference type="GO" id="GO:0032549">
    <property type="term" value="F:ribonucleoside binding"/>
    <property type="evidence" value="ECO:0007669"/>
    <property type="project" value="InterPro"/>
</dbReference>
<dbReference type="GO" id="GO:0006351">
    <property type="term" value="P:DNA-templated transcription"/>
    <property type="evidence" value="ECO:0007669"/>
    <property type="project" value="UniProtKB-UniRule"/>
</dbReference>
<dbReference type="CDD" id="cd00653">
    <property type="entry name" value="RNA_pol_B_RPB2"/>
    <property type="match status" value="1"/>
</dbReference>
<dbReference type="FunFam" id="3.90.1800.10:FF:000001">
    <property type="entry name" value="DNA-directed RNA polymerase subunit beta"/>
    <property type="match status" value="1"/>
</dbReference>
<dbReference type="Gene3D" id="2.40.50.100">
    <property type="match status" value="1"/>
</dbReference>
<dbReference type="Gene3D" id="2.40.50.150">
    <property type="match status" value="1"/>
</dbReference>
<dbReference type="Gene3D" id="3.90.1100.10">
    <property type="match status" value="1"/>
</dbReference>
<dbReference type="Gene3D" id="2.30.150.10">
    <property type="entry name" value="DNA-directed RNA polymerase, beta subunit, external 1 domain"/>
    <property type="match status" value="1"/>
</dbReference>
<dbReference type="Gene3D" id="2.40.270.10">
    <property type="entry name" value="DNA-directed RNA polymerase, subunit 2, domain 6"/>
    <property type="match status" value="1"/>
</dbReference>
<dbReference type="Gene3D" id="3.90.1800.10">
    <property type="entry name" value="RNA polymerase alpha subunit dimerisation domain"/>
    <property type="match status" value="1"/>
</dbReference>
<dbReference type="Gene3D" id="3.90.1110.10">
    <property type="entry name" value="RNA polymerase Rpb2, domain 2"/>
    <property type="match status" value="1"/>
</dbReference>
<dbReference type="HAMAP" id="MF_01321">
    <property type="entry name" value="RNApol_bact_RpoB"/>
    <property type="match status" value="1"/>
</dbReference>
<dbReference type="InterPro" id="IPR042107">
    <property type="entry name" value="DNA-dir_RNA_pol_bsu_ext_1_sf"/>
</dbReference>
<dbReference type="InterPro" id="IPR019462">
    <property type="entry name" value="DNA-dir_RNA_pol_bsu_external_1"/>
</dbReference>
<dbReference type="InterPro" id="IPR015712">
    <property type="entry name" value="DNA-dir_RNA_pol_su2"/>
</dbReference>
<dbReference type="InterPro" id="IPR007120">
    <property type="entry name" value="DNA-dir_RNAP_su2_dom"/>
</dbReference>
<dbReference type="InterPro" id="IPR037033">
    <property type="entry name" value="DNA-dir_RNAP_su2_hyb_sf"/>
</dbReference>
<dbReference type="InterPro" id="IPR010243">
    <property type="entry name" value="RNA_pol_bsu_bac"/>
</dbReference>
<dbReference type="InterPro" id="IPR007121">
    <property type="entry name" value="RNA_pol_bsu_CS"/>
</dbReference>
<dbReference type="InterPro" id="IPR007644">
    <property type="entry name" value="RNA_pol_bsu_protrusion"/>
</dbReference>
<dbReference type="InterPro" id="IPR007642">
    <property type="entry name" value="RNA_pol_Rpb2_2"/>
</dbReference>
<dbReference type="InterPro" id="IPR037034">
    <property type="entry name" value="RNA_pol_Rpb2_2_sf"/>
</dbReference>
<dbReference type="InterPro" id="IPR007645">
    <property type="entry name" value="RNA_pol_Rpb2_3"/>
</dbReference>
<dbReference type="InterPro" id="IPR007641">
    <property type="entry name" value="RNA_pol_Rpb2_7"/>
</dbReference>
<dbReference type="InterPro" id="IPR014724">
    <property type="entry name" value="RNA_pol_RPB2_OB-fold"/>
</dbReference>
<dbReference type="NCBIfam" id="NF001616">
    <property type="entry name" value="PRK00405.1"/>
    <property type="match status" value="1"/>
</dbReference>
<dbReference type="NCBIfam" id="TIGR02013">
    <property type="entry name" value="rpoB"/>
    <property type="match status" value="1"/>
</dbReference>
<dbReference type="PANTHER" id="PTHR20856">
    <property type="entry name" value="DNA-DIRECTED RNA POLYMERASE I SUBUNIT 2"/>
    <property type="match status" value="1"/>
</dbReference>
<dbReference type="Pfam" id="PF04563">
    <property type="entry name" value="RNA_pol_Rpb2_1"/>
    <property type="match status" value="1"/>
</dbReference>
<dbReference type="Pfam" id="PF04561">
    <property type="entry name" value="RNA_pol_Rpb2_2"/>
    <property type="match status" value="2"/>
</dbReference>
<dbReference type="Pfam" id="PF04565">
    <property type="entry name" value="RNA_pol_Rpb2_3"/>
    <property type="match status" value="1"/>
</dbReference>
<dbReference type="Pfam" id="PF10385">
    <property type="entry name" value="RNA_pol_Rpb2_45"/>
    <property type="match status" value="1"/>
</dbReference>
<dbReference type="Pfam" id="PF00562">
    <property type="entry name" value="RNA_pol_Rpb2_6"/>
    <property type="match status" value="1"/>
</dbReference>
<dbReference type="Pfam" id="PF04560">
    <property type="entry name" value="RNA_pol_Rpb2_7"/>
    <property type="match status" value="1"/>
</dbReference>
<dbReference type="SUPFAM" id="SSF64484">
    <property type="entry name" value="beta and beta-prime subunits of DNA dependent RNA-polymerase"/>
    <property type="match status" value="1"/>
</dbReference>
<dbReference type="PROSITE" id="PS01166">
    <property type="entry name" value="RNA_POL_BETA"/>
    <property type="match status" value="1"/>
</dbReference>